<keyword id="KW-1015">Disulfide bond</keyword>
<keyword id="KW-0611">Plant defense</keyword>
<keyword id="KW-0964">Secreted</keyword>
<keyword id="KW-0732">Signal</keyword>
<keyword id="KW-0800">Toxin</keyword>
<proteinExistence type="evidence at transcript level"/>
<comment type="function">
    <text>Thionins are small plant proteins which are toxic to animal cells. They seem to exert their toxic effect at the level of the cell membrane. Their precise function is not known.</text>
</comment>
<comment type="subcellular location">
    <subcellularLocation>
        <location evidence="3">Secreted</location>
    </subcellularLocation>
</comment>
<comment type="similarity">
    <text evidence="3">Belongs to the plant thionin (TC 1.C.44) family. 4 C-C subfamily.</text>
</comment>
<dbReference type="EMBL" id="L36883">
    <property type="protein sequence ID" value="AAA91048.1"/>
    <property type="molecule type" value="Genomic_DNA"/>
</dbReference>
<dbReference type="SMR" id="Q42838"/>
<dbReference type="ExpressionAtlas" id="Q42838">
    <property type="expression patterns" value="baseline"/>
</dbReference>
<dbReference type="GO" id="GO:0005576">
    <property type="term" value="C:extracellular region"/>
    <property type="evidence" value="ECO:0007669"/>
    <property type="project" value="UniProtKB-SubCell"/>
</dbReference>
<dbReference type="GO" id="GO:0090729">
    <property type="term" value="F:toxin activity"/>
    <property type="evidence" value="ECO:0007669"/>
    <property type="project" value="UniProtKB-KW"/>
</dbReference>
<dbReference type="GO" id="GO:0006952">
    <property type="term" value="P:defense response"/>
    <property type="evidence" value="ECO:0007669"/>
    <property type="project" value="UniProtKB-KW"/>
</dbReference>
<dbReference type="FunFam" id="3.30.1350.10:FF:000001">
    <property type="entry name" value="Hellethionin-D"/>
    <property type="match status" value="1"/>
</dbReference>
<dbReference type="Gene3D" id="3.30.1350.10">
    <property type="entry name" value="Thionin-like"/>
    <property type="match status" value="1"/>
</dbReference>
<dbReference type="InterPro" id="IPR001010">
    <property type="entry name" value="Thionin"/>
</dbReference>
<dbReference type="InterPro" id="IPR036391">
    <property type="entry name" value="Thionin-like_sf"/>
</dbReference>
<dbReference type="PANTHER" id="PTHR33920">
    <property type="entry name" value="THIONIN-2.1-RELATED"/>
    <property type="match status" value="1"/>
</dbReference>
<dbReference type="PANTHER" id="PTHR33920:SF2">
    <property type="entry name" value="THIONIN-2.1-RELATED"/>
    <property type="match status" value="1"/>
</dbReference>
<dbReference type="Pfam" id="PF00321">
    <property type="entry name" value="Thionin"/>
    <property type="match status" value="1"/>
</dbReference>
<dbReference type="PRINTS" id="PR00287">
    <property type="entry name" value="THIONIN"/>
</dbReference>
<dbReference type="SUPFAM" id="SSF57429">
    <property type="entry name" value="Crambin-like"/>
    <property type="match status" value="1"/>
</dbReference>
<dbReference type="PROSITE" id="PS00271">
    <property type="entry name" value="THIONIN"/>
    <property type="match status" value="1"/>
</dbReference>
<feature type="signal peptide" evidence="2">
    <location>
        <begin position="1"/>
        <end position="28"/>
    </location>
</feature>
<feature type="chain" id="PRO_0000034122" description="Thionin BTH7">
    <location>
        <begin position="29"/>
        <end position="74"/>
    </location>
</feature>
<feature type="propeptide" id="PRO_0000459414" description="Acidic domain" evidence="3">
    <location>
        <begin position="75"/>
        <end position="137"/>
    </location>
</feature>
<feature type="disulfide bond" evidence="1">
    <location>
        <begin position="31"/>
        <end position="68"/>
    </location>
</feature>
<feature type="disulfide bond" evidence="1">
    <location>
        <begin position="32"/>
        <end position="60"/>
    </location>
</feature>
<feature type="disulfide bond" evidence="1">
    <location>
        <begin position="40"/>
        <end position="58"/>
    </location>
</feature>
<feature type="disulfide bond" evidence="1">
    <location>
        <begin position="44"/>
        <end position="54"/>
    </location>
</feature>
<organism>
    <name type="scientific">Hordeum vulgare</name>
    <name type="common">Barley</name>
    <dbReference type="NCBI Taxonomy" id="4513"/>
    <lineage>
        <taxon>Eukaryota</taxon>
        <taxon>Viridiplantae</taxon>
        <taxon>Streptophyta</taxon>
        <taxon>Embryophyta</taxon>
        <taxon>Tracheophyta</taxon>
        <taxon>Spermatophyta</taxon>
        <taxon>Magnoliopsida</taxon>
        <taxon>Liliopsida</taxon>
        <taxon>Poales</taxon>
        <taxon>Poaceae</taxon>
        <taxon>BOP clade</taxon>
        <taxon>Pooideae</taxon>
        <taxon>Triticodae</taxon>
        <taxon>Triticeae</taxon>
        <taxon>Hordeinae</taxon>
        <taxon>Hordeum</taxon>
    </lineage>
</organism>
<protein>
    <recommendedName>
        <fullName>Thionin BTH7</fullName>
    </recommendedName>
</protein>
<sequence>MATNKSIKSVVICVLILGLVLEQVQVEGKSCCKNTTGRNCYNACRFAGGSRPVCATACGCKIISGPTCPRDYPKLNLLPESGEPNVTEYCTIGCRTSVCDNMDNVSRGQEMKFDMGLCSNACARFCNDGEVIQSVEA</sequence>
<name>THN7_HORVU</name>
<evidence type="ECO:0000250" key="1">
    <source>
        <dbReference type="UniProtKB" id="P60057"/>
    </source>
</evidence>
<evidence type="ECO:0000255" key="2"/>
<evidence type="ECO:0000305" key="3"/>
<reference key="1">
    <citation type="submission" date="1996-03" db="EMBL/GenBank/DDBJ databases">
        <title>Specific and distinct expression patterns of two members of the thionin multigene family of barley in transgenic tobacco.</title>
        <authorList>
            <person name="Holtorf S."/>
            <person name="Schuetz C."/>
            <person name="Apel K."/>
            <person name="Bohlmann H."/>
        </authorList>
    </citation>
    <scope>NUCLEOTIDE SEQUENCE [MRNA]</scope>
</reference>
<accession>Q42838</accession>